<protein>
    <recommendedName>
        <fullName evidence="1">UPF0102 protein BMEI1769</fullName>
    </recommendedName>
</protein>
<feature type="chain" id="PRO_0000167336" description="UPF0102 protein BMEI1769">
    <location>
        <begin position="1"/>
        <end position="126"/>
    </location>
</feature>
<name>Y1769_BRUME</name>
<evidence type="ECO:0000255" key="1">
    <source>
        <dbReference type="HAMAP-Rule" id="MF_00048"/>
    </source>
</evidence>
<comment type="similarity">
    <text evidence="1">Belongs to the UPF0102 family.</text>
</comment>
<accession>P67228</accession>
<accession>Q8G2Y1</accession>
<accession>Q8YEV8</accession>
<dbReference type="EMBL" id="AE008917">
    <property type="protein sequence ID" value="AAL52950.1"/>
    <property type="molecule type" value="Genomic_DNA"/>
</dbReference>
<dbReference type="PIR" id="AC3473">
    <property type="entry name" value="AC3473"/>
</dbReference>
<dbReference type="RefSeq" id="WP_002965427.1">
    <property type="nucleotide sequence ID" value="NZ_GG703778.1"/>
</dbReference>
<dbReference type="SMR" id="P67228"/>
<dbReference type="KEGG" id="bme:BMEI1769"/>
<dbReference type="KEGG" id="bmel:DK63_1716"/>
<dbReference type="PATRIC" id="fig|224914.52.peg.1814"/>
<dbReference type="eggNOG" id="COG0792">
    <property type="taxonomic scope" value="Bacteria"/>
</dbReference>
<dbReference type="PhylomeDB" id="P67228"/>
<dbReference type="Proteomes" id="UP000000419">
    <property type="component" value="Chromosome I"/>
</dbReference>
<dbReference type="GO" id="GO:0003676">
    <property type="term" value="F:nucleic acid binding"/>
    <property type="evidence" value="ECO:0007669"/>
    <property type="project" value="InterPro"/>
</dbReference>
<dbReference type="Gene3D" id="3.40.1350.10">
    <property type="match status" value="1"/>
</dbReference>
<dbReference type="HAMAP" id="MF_00048">
    <property type="entry name" value="UPF0102"/>
    <property type="match status" value="1"/>
</dbReference>
<dbReference type="InterPro" id="IPR011335">
    <property type="entry name" value="Restrct_endonuc-II-like"/>
</dbReference>
<dbReference type="InterPro" id="IPR011856">
    <property type="entry name" value="tRNA_endonuc-like_dom_sf"/>
</dbReference>
<dbReference type="InterPro" id="IPR003509">
    <property type="entry name" value="UPF0102_YraN-like"/>
</dbReference>
<dbReference type="NCBIfam" id="NF009151">
    <property type="entry name" value="PRK12497.1-5"/>
    <property type="match status" value="1"/>
</dbReference>
<dbReference type="PANTHER" id="PTHR34039">
    <property type="entry name" value="UPF0102 PROTEIN YRAN"/>
    <property type="match status" value="1"/>
</dbReference>
<dbReference type="PANTHER" id="PTHR34039:SF1">
    <property type="entry name" value="UPF0102 PROTEIN YRAN"/>
    <property type="match status" value="1"/>
</dbReference>
<dbReference type="Pfam" id="PF02021">
    <property type="entry name" value="UPF0102"/>
    <property type="match status" value="1"/>
</dbReference>
<dbReference type="SUPFAM" id="SSF52980">
    <property type="entry name" value="Restriction endonuclease-like"/>
    <property type="match status" value="1"/>
</dbReference>
<reference key="1">
    <citation type="journal article" date="2002" name="Proc. Natl. Acad. Sci. U.S.A.">
        <title>The genome sequence of the facultative intracellular pathogen Brucella melitensis.</title>
        <authorList>
            <person name="DelVecchio V.G."/>
            <person name="Kapatral V."/>
            <person name="Redkar R.J."/>
            <person name="Patra G."/>
            <person name="Mujer C."/>
            <person name="Los T."/>
            <person name="Ivanova N."/>
            <person name="Anderson I."/>
            <person name="Bhattacharyya A."/>
            <person name="Lykidis A."/>
            <person name="Reznik G."/>
            <person name="Jablonski L."/>
            <person name="Larsen N."/>
            <person name="D'Souza M."/>
            <person name="Bernal A."/>
            <person name="Mazur M."/>
            <person name="Goltsman E."/>
            <person name="Selkov E."/>
            <person name="Elzer P.H."/>
            <person name="Hagius S."/>
            <person name="O'Callaghan D."/>
            <person name="Letesson J.-J."/>
            <person name="Haselkorn R."/>
            <person name="Kyrpides N.C."/>
            <person name="Overbeek R."/>
        </authorList>
    </citation>
    <scope>NUCLEOTIDE SEQUENCE [LARGE SCALE GENOMIC DNA]</scope>
    <source>
        <strain>ATCC 23456 / CCUG 17765 / NCTC 10094 / 16M</strain>
    </source>
</reference>
<proteinExistence type="inferred from homology"/>
<gene>
    <name type="ordered locus">BMEI1769</name>
</gene>
<sequence>MTDLREKKRIAFFRGHSAERLAAFALMLKGFRIVARRYRTRLGEIDLIARRGDLVLIVEVKARASFEAAQFAVTPQAMRRIEAAADLWLQRQTDRARLSLRFDMVAVLPRRWPKHVPAFFTAGHYG</sequence>
<organism>
    <name type="scientific">Brucella melitensis biotype 1 (strain ATCC 23456 / CCUG 17765 / NCTC 10094 / 16M)</name>
    <dbReference type="NCBI Taxonomy" id="224914"/>
    <lineage>
        <taxon>Bacteria</taxon>
        <taxon>Pseudomonadati</taxon>
        <taxon>Pseudomonadota</taxon>
        <taxon>Alphaproteobacteria</taxon>
        <taxon>Hyphomicrobiales</taxon>
        <taxon>Brucellaceae</taxon>
        <taxon>Brucella/Ochrobactrum group</taxon>
        <taxon>Brucella</taxon>
    </lineage>
</organism>